<comment type="function">
    <text evidence="1">Catalyzes the NADPH-dependent reduction of N-acetyl-5-glutamyl phosphate to yield N-acetyl-L-glutamate 5-semialdehyde.</text>
</comment>
<comment type="catalytic activity">
    <reaction evidence="1">
        <text>N-acetyl-L-glutamate 5-semialdehyde + phosphate + NADP(+) = N-acetyl-L-glutamyl 5-phosphate + NADPH + H(+)</text>
        <dbReference type="Rhea" id="RHEA:21588"/>
        <dbReference type="ChEBI" id="CHEBI:15378"/>
        <dbReference type="ChEBI" id="CHEBI:29123"/>
        <dbReference type="ChEBI" id="CHEBI:43474"/>
        <dbReference type="ChEBI" id="CHEBI:57783"/>
        <dbReference type="ChEBI" id="CHEBI:57936"/>
        <dbReference type="ChEBI" id="CHEBI:58349"/>
        <dbReference type="EC" id="1.2.1.38"/>
    </reaction>
</comment>
<comment type="pathway">
    <text evidence="1">Amino-acid biosynthesis; L-arginine biosynthesis; N(2)-acetyl-L-ornithine from L-glutamate: step 3/4.</text>
</comment>
<comment type="subcellular location">
    <subcellularLocation>
        <location evidence="1">Cytoplasm</location>
    </subcellularLocation>
</comment>
<comment type="similarity">
    <text evidence="1">Belongs to the NAGSA dehydrogenase family. Type 2 subfamily.</text>
</comment>
<name>ARGC_BURCM</name>
<protein>
    <recommendedName>
        <fullName evidence="1">N-acetyl-gamma-glutamyl-phosphate reductase</fullName>
        <shortName evidence="1">AGPR</shortName>
        <ecNumber evidence="1">1.2.1.38</ecNumber>
    </recommendedName>
    <alternativeName>
        <fullName evidence="1">N-acetyl-glutamate semialdehyde dehydrogenase</fullName>
        <shortName evidence="1">NAGSA dehydrogenase</shortName>
    </alternativeName>
</protein>
<proteinExistence type="inferred from homology"/>
<keyword id="KW-0028">Amino-acid biosynthesis</keyword>
<keyword id="KW-0055">Arginine biosynthesis</keyword>
<keyword id="KW-0963">Cytoplasm</keyword>
<keyword id="KW-0521">NADP</keyword>
<keyword id="KW-0560">Oxidoreductase</keyword>
<reference key="1">
    <citation type="submission" date="2006-08" db="EMBL/GenBank/DDBJ databases">
        <title>Complete sequence of chromosome 2 of Burkholderia cepacia AMMD.</title>
        <authorList>
            <person name="Copeland A."/>
            <person name="Lucas S."/>
            <person name="Lapidus A."/>
            <person name="Barry K."/>
            <person name="Detter J.C."/>
            <person name="Glavina del Rio T."/>
            <person name="Hammon N."/>
            <person name="Israni S."/>
            <person name="Pitluck S."/>
            <person name="Bruce D."/>
            <person name="Chain P."/>
            <person name="Malfatti S."/>
            <person name="Shin M."/>
            <person name="Vergez L."/>
            <person name="Schmutz J."/>
            <person name="Larimer F."/>
            <person name="Land M."/>
            <person name="Hauser L."/>
            <person name="Kyrpides N."/>
            <person name="Kim E."/>
            <person name="Parke J."/>
            <person name="Coenye T."/>
            <person name="Konstantinidis K."/>
            <person name="Ramette A."/>
            <person name="Tiedje J."/>
            <person name="Richardson P."/>
        </authorList>
    </citation>
    <scope>NUCLEOTIDE SEQUENCE [LARGE SCALE GENOMIC DNA]</scope>
    <source>
        <strain>ATCC BAA-244 / DSM 16087 / CCUG 44356 / LMG 19182 / AMMD</strain>
    </source>
</reference>
<accession>Q0B5P6</accession>
<sequence>MSLPIVYIDGDQGTTGLQIHERLRDRTDLRLVTLPDAERKDPARRAEAINASDIAILCLPDAAAREAVGFIRNPAVRVIDASSAHRTEPDWVYGFPEMVDGHAQTIAHARRVTNPGCYPTGAVGLLRPLQQAGLLPRDYPVCIHAVSGYSGGGRAAVDAFESNGAARAQPLQVYGLALAHKHVPEIQLHAGLAHRPLFVPAYGAYRQGIVLTVPIELRLLPAGVTGEALHACLAHHYAGARRVEVTPLADTRAITHLDPQALNGSNDLRLSVFVNAEHGQVLLAAVFDNLGKGASGAAVQNLDLMLGVASAVKAA</sequence>
<feature type="chain" id="PRO_1000137114" description="N-acetyl-gamma-glutamyl-phosphate reductase">
    <location>
        <begin position="1"/>
        <end position="315"/>
    </location>
</feature>
<feature type="active site" evidence="1">
    <location>
        <position position="117"/>
    </location>
</feature>
<gene>
    <name evidence="1" type="primary">argC</name>
    <name type="ordered locus">Bamb_4978</name>
</gene>
<organism>
    <name type="scientific">Burkholderia ambifaria (strain ATCC BAA-244 / DSM 16087 / CCUG 44356 / LMG 19182 / AMMD)</name>
    <name type="common">Burkholderia cepacia (strain AMMD)</name>
    <dbReference type="NCBI Taxonomy" id="339670"/>
    <lineage>
        <taxon>Bacteria</taxon>
        <taxon>Pseudomonadati</taxon>
        <taxon>Pseudomonadota</taxon>
        <taxon>Betaproteobacteria</taxon>
        <taxon>Burkholderiales</taxon>
        <taxon>Burkholderiaceae</taxon>
        <taxon>Burkholderia</taxon>
        <taxon>Burkholderia cepacia complex</taxon>
    </lineage>
</organism>
<dbReference type="EC" id="1.2.1.38" evidence="1"/>
<dbReference type="EMBL" id="CP000441">
    <property type="protein sequence ID" value="ABI90527.1"/>
    <property type="molecule type" value="Genomic_DNA"/>
</dbReference>
<dbReference type="RefSeq" id="WP_011659914.1">
    <property type="nucleotide sequence ID" value="NC_008391.1"/>
</dbReference>
<dbReference type="SMR" id="Q0B5P6"/>
<dbReference type="GeneID" id="93087923"/>
<dbReference type="KEGG" id="bam:Bamb_4978"/>
<dbReference type="PATRIC" id="fig|339670.21.peg.5350"/>
<dbReference type="eggNOG" id="COG0002">
    <property type="taxonomic scope" value="Bacteria"/>
</dbReference>
<dbReference type="UniPathway" id="UPA00068">
    <property type="reaction ID" value="UER00108"/>
</dbReference>
<dbReference type="Proteomes" id="UP000000662">
    <property type="component" value="Chromosome 2"/>
</dbReference>
<dbReference type="GO" id="GO:0005737">
    <property type="term" value="C:cytoplasm"/>
    <property type="evidence" value="ECO:0007669"/>
    <property type="project" value="UniProtKB-SubCell"/>
</dbReference>
<dbReference type="GO" id="GO:0003942">
    <property type="term" value="F:N-acetyl-gamma-glutamyl-phosphate reductase activity"/>
    <property type="evidence" value="ECO:0007669"/>
    <property type="project" value="UniProtKB-UniRule"/>
</dbReference>
<dbReference type="GO" id="GO:0051287">
    <property type="term" value="F:NAD binding"/>
    <property type="evidence" value="ECO:0007669"/>
    <property type="project" value="InterPro"/>
</dbReference>
<dbReference type="GO" id="GO:0006526">
    <property type="term" value="P:L-arginine biosynthetic process"/>
    <property type="evidence" value="ECO:0007669"/>
    <property type="project" value="UniProtKB-UniRule"/>
</dbReference>
<dbReference type="CDD" id="cd23935">
    <property type="entry name" value="AGPR_2_C"/>
    <property type="match status" value="1"/>
</dbReference>
<dbReference type="CDD" id="cd17896">
    <property type="entry name" value="AGPR_2_N"/>
    <property type="match status" value="1"/>
</dbReference>
<dbReference type="Gene3D" id="3.30.360.10">
    <property type="entry name" value="Dihydrodipicolinate Reductase, domain 2"/>
    <property type="match status" value="1"/>
</dbReference>
<dbReference type="Gene3D" id="3.40.50.720">
    <property type="entry name" value="NAD(P)-binding Rossmann-like Domain"/>
    <property type="match status" value="1"/>
</dbReference>
<dbReference type="HAMAP" id="MF_01110">
    <property type="entry name" value="ArgC_type2"/>
    <property type="match status" value="1"/>
</dbReference>
<dbReference type="InterPro" id="IPR010136">
    <property type="entry name" value="AGPR_type-2"/>
</dbReference>
<dbReference type="InterPro" id="IPR036291">
    <property type="entry name" value="NAD(P)-bd_dom_sf"/>
</dbReference>
<dbReference type="InterPro" id="IPR050085">
    <property type="entry name" value="NAGSA_dehydrogenase"/>
</dbReference>
<dbReference type="InterPro" id="IPR000534">
    <property type="entry name" value="Semialdehyde_DH_NAD-bd"/>
</dbReference>
<dbReference type="NCBIfam" id="TIGR01851">
    <property type="entry name" value="argC_other"/>
    <property type="match status" value="1"/>
</dbReference>
<dbReference type="PANTHER" id="PTHR32338:SF10">
    <property type="entry name" value="N-ACETYL-GAMMA-GLUTAMYL-PHOSPHATE REDUCTASE, CHLOROPLASTIC-RELATED"/>
    <property type="match status" value="1"/>
</dbReference>
<dbReference type="PANTHER" id="PTHR32338">
    <property type="entry name" value="N-ACETYL-GAMMA-GLUTAMYL-PHOSPHATE REDUCTASE, CHLOROPLASTIC-RELATED-RELATED"/>
    <property type="match status" value="1"/>
</dbReference>
<dbReference type="Pfam" id="PF01118">
    <property type="entry name" value="Semialdhyde_dh"/>
    <property type="match status" value="1"/>
</dbReference>
<dbReference type="Pfam" id="PF22698">
    <property type="entry name" value="Semialdhyde_dhC_1"/>
    <property type="match status" value="1"/>
</dbReference>
<dbReference type="SMART" id="SM00859">
    <property type="entry name" value="Semialdhyde_dh"/>
    <property type="match status" value="1"/>
</dbReference>
<dbReference type="SUPFAM" id="SSF55347">
    <property type="entry name" value="Glyceraldehyde-3-phosphate dehydrogenase-like, C-terminal domain"/>
    <property type="match status" value="1"/>
</dbReference>
<dbReference type="SUPFAM" id="SSF51735">
    <property type="entry name" value="NAD(P)-binding Rossmann-fold domains"/>
    <property type="match status" value="1"/>
</dbReference>
<evidence type="ECO:0000255" key="1">
    <source>
        <dbReference type="HAMAP-Rule" id="MF_01110"/>
    </source>
</evidence>